<proteinExistence type="inferred from homology"/>
<accession>Q1MPZ3</accession>
<gene>
    <name evidence="1" type="primary">sfsA</name>
    <name type="ordered locus">LI0880</name>
</gene>
<dbReference type="EMBL" id="AM180252">
    <property type="protein sequence ID" value="CAJ54934.1"/>
    <property type="molecule type" value="Genomic_DNA"/>
</dbReference>
<dbReference type="RefSeq" id="WP_011526963.1">
    <property type="nucleotide sequence ID" value="NC_008011.1"/>
</dbReference>
<dbReference type="SMR" id="Q1MPZ3"/>
<dbReference type="STRING" id="363253.LI0880"/>
<dbReference type="KEGG" id="lip:LI0880"/>
<dbReference type="eggNOG" id="COG1489">
    <property type="taxonomic scope" value="Bacteria"/>
</dbReference>
<dbReference type="HOGENOM" id="CLU_052299_2_0_7"/>
<dbReference type="OrthoDB" id="9802365at2"/>
<dbReference type="Proteomes" id="UP000002430">
    <property type="component" value="Chromosome"/>
</dbReference>
<dbReference type="GO" id="GO:0003677">
    <property type="term" value="F:DNA binding"/>
    <property type="evidence" value="ECO:0007669"/>
    <property type="project" value="InterPro"/>
</dbReference>
<dbReference type="CDD" id="cd22359">
    <property type="entry name" value="SfsA-like_bacterial"/>
    <property type="match status" value="1"/>
</dbReference>
<dbReference type="Gene3D" id="2.40.50.580">
    <property type="match status" value="1"/>
</dbReference>
<dbReference type="Gene3D" id="3.40.1350.60">
    <property type="match status" value="1"/>
</dbReference>
<dbReference type="HAMAP" id="MF_00095">
    <property type="entry name" value="SfsA"/>
    <property type="match status" value="1"/>
</dbReference>
<dbReference type="InterPro" id="IPR005224">
    <property type="entry name" value="SfsA"/>
</dbReference>
<dbReference type="InterPro" id="IPR040452">
    <property type="entry name" value="SfsA_C"/>
</dbReference>
<dbReference type="InterPro" id="IPR041465">
    <property type="entry name" value="SfsA_N"/>
</dbReference>
<dbReference type="PANTHER" id="PTHR30545">
    <property type="entry name" value="SUGAR FERMENTATION STIMULATION PROTEIN A"/>
    <property type="match status" value="1"/>
</dbReference>
<dbReference type="PANTHER" id="PTHR30545:SF2">
    <property type="entry name" value="SUGAR FERMENTATION STIMULATION PROTEIN A"/>
    <property type="match status" value="1"/>
</dbReference>
<dbReference type="Pfam" id="PF03749">
    <property type="entry name" value="SfsA"/>
    <property type="match status" value="1"/>
</dbReference>
<dbReference type="Pfam" id="PF17746">
    <property type="entry name" value="SfsA_N"/>
    <property type="match status" value="1"/>
</dbReference>
<keyword id="KW-1185">Reference proteome</keyword>
<comment type="similarity">
    <text evidence="1">Belongs to the SfsA family.</text>
</comment>
<protein>
    <recommendedName>
        <fullName evidence="1">Sugar fermentation stimulation protein homolog</fullName>
    </recommendedName>
</protein>
<name>SFSA_LAWIP</name>
<feature type="chain" id="PRO_0000340142" description="Sugar fermentation stimulation protein homolog">
    <location>
        <begin position="1"/>
        <end position="262"/>
    </location>
</feature>
<sequence>MEKTIIYFPKGCVIGRFVKRYKRFFVNVLVDGEEVVAHTNNTGSMLGLLNSGTPVLLSPALNPTRKLQWTLELVWTGGTYPDENKLPSFPNKEGGVTPFHSGLGFWVGVNTLIPHKFFKLAFEAGLFPWTKGYSICNTETKIGMSRLDICLHGNGVPRLWVECKNVTLVENNVALFPDAVSLRGLKHLQELKKIIDSGERAATFYCVQRKDGKFFGPAASIDPQYTEMFWKVKKRGVEIYPYHIDITTKGLSLGPILPLLSE</sequence>
<organism>
    <name type="scientific">Lawsonia intracellularis (strain PHE/MN1-00)</name>
    <dbReference type="NCBI Taxonomy" id="363253"/>
    <lineage>
        <taxon>Bacteria</taxon>
        <taxon>Pseudomonadati</taxon>
        <taxon>Thermodesulfobacteriota</taxon>
        <taxon>Desulfovibrionia</taxon>
        <taxon>Desulfovibrionales</taxon>
        <taxon>Desulfovibrionaceae</taxon>
        <taxon>Lawsonia</taxon>
    </lineage>
</organism>
<evidence type="ECO:0000255" key="1">
    <source>
        <dbReference type="HAMAP-Rule" id="MF_00095"/>
    </source>
</evidence>
<reference key="1">
    <citation type="submission" date="2005-11" db="EMBL/GenBank/DDBJ databases">
        <title>The complete genome sequence of Lawsonia intracellularis: the causative agent of proliferative enteropathy.</title>
        <authorList>
            <person name="Kaur K."/>
            <person name="Zhang Q."/>
            <person name="Beckler D."/>
            <person name="Munir S."/>
            <person name="Li L."/>
            <person name="Kinsley K."/>
            <person name="Herron L."/>
            <person name="Peterson A."/>
            <person name="May B."/>
            <person name="Singh S."/>
            <person name="Gebhart C."/>
            <person name="Kapur V."/>
        </authorList>
    </citation>
    <scope>NUCLEOTIDE SEQUENCE [LARGE SCALE GENOMIC DNA]</scope>
    <source>
        <strain>PHE/MN1-00</strain>
    </source>
</reference>